<organism>
    <name type="scientific">Nitrosospira multiformis (strain ATCC 25196 / NCIMB 11849 / C 71)</name>
    <dbReference type="NCBI Taxonomy" id="323848"/>
    <lineage>
        <taxon>Bacteria</taxon>
        <taxon>Pseudomonadati</taxon>
        <taxon>Pseudomonadota</taxon>
        <taxon>Betaproteobacteria</taxon>
        <taxon>Nitrosomonadales</taxon>
        <taxon>Nitrosomonadaceae</taxon>
        <taxon>Nitrosospira</taxon>
    </lineage>
</organism>
<proteinExistence type="inferred from homology"/>
<sequence>MSKLNDLPASTLQFYTTASYPCSYLPEQLARSQVATPSHLIDTIVYGGLVQAGFRRSGAFTYRPFCDNCRACLPVRVVVDSLALRRSQRRSWNRHRHLVATQHDLYYHPDHYALYLRYQAQRHSGGGMDRDSREQYRHFLLPSNVDSKLVEFRENGVLRMVSIIDELPDGISSVYTFFDPDVPGASFGTYNILWQAHQCRELKLPYLYLGYWIKDSRKMAYKAAFRPLQALINGQWELLENLSDYPSCAFP</sequence>
<comment type="function">
    <text evidence="1">Functions in the N-end rule pathway of protein degradation where it conjugates Leu from its aminoacyl-tRNA to the N-termini of proteins containing an N-terminal aspartate or glutamate.</text>
</comment>
<comment type="catalytic activity">
    <reaction evidence="1">
        <text>N-terminal L-glutamyl-[protein] + L-leucyl-tRNA(Leu) = N-terminal L-leucyl-L-glutamyl-[protein] + tRNA(Leu) + H(+)</text>
        <dbReference type="Rhea" id="RHEA:50412"/>
        <dbReference type="Rhea" id="RHEA-COMP:9613"/>
        <dbReference type="Rhea" id="RHEA-COMP:9622"/>
        <dbReference type="Rhea" id="RHEA-COMP:12664"/>
        <dbReference type="Rhea" id="RHEA-COMP:12668"/>
        <dbReference type="ChEBI" id="CHEBI:15378"/>
        <dbReference type="ChEBI" id="CHEBI:64721"/>
        <dbReference type="ChEBI" id="CHEBI:78442"/>
        <dbReference type="ChEBI" id="CHEBI:78494"/>
        <dbReference type="ChEBI" id="CHEBI:133041"/>
        <dbReference type="EC" id="2.3.2.29"/>
    </reaction>
</comment>
<comment type="catalytic activity">
    <reaction evidence="1">
        <text>N-terminal L-aspartyl-[protein] + L-leucyl-tRNA(Leu) = N-terminal L-leucyl-L-aspartyl-[protein] + tRNA(Leu) + H(+)</text>
        <dbReference type="Rhea" id="RHEA:50420"/>
        <dbReference type="Rhea" id="RHEA-COMP:9613"/>
        <dbReference type="Rhea" id="RHEA-COMP:9622"/>
        <dbReference type="Rhea" id="RHEA-COMP:12669"/>
        <dbReference type="Rhea" id="RHEA-COMP:12674"/>
        <dbReference type="ChEBI" id="CHEBI:15378"/>
        <dbReference type="ChEBI" id="CHEBI:64720"/>
        <dbReference type="ChEBI" id="CHEBI:78442"/>
        <dbReference type="ChEBI" id="CHEBI:78494"/>
        <dbReference type="ChEBI" id="CHEBI:133042"/>
        <dbReference type="EC" id="2.3.2.29"/>
    </reaction>
</comment>
<comment type="subcellular location">
    <subcellularLocation>
        <location evidence="1">Cytoplasm</location>
    </subcellularLocation>
</comment>
<comment type="similarity">
    <text evidence="1">Belongs to the R-transferase family. Bpt subfamily.</text>
</comment>
<gene>
    <name evidence="1" type="primary">bpt</name>
    <name type="ordered locus">Nmul_A2708</name>
</gene>
<keyword id="KW-0012">Acyltransferase</keyword>
<keyword id="KW-0963">Cytoplasm</keyword>
<keyword id="KW-1185">Reference proteome</keyword>
<keyword id="KW-0808">Transferase</keyword>
<reference key="1">
    <citation type="submission" date="2005-08" db="EMBL/GenBank/DDBJ databases">
        <title>Complete sequence of chromosome 1 of Nitrosospira multiformis ATCC 25196.</title>
        <authorList>
            <person name="Copeland A."/>
            <person name="Lucas S."/>
            <person name="Lapidus A."/>
            <person name="Barry K."/>
            <person name="Detter J.C."/>
            <person name="Glavina T."/>
            <person name="Hammon N."/>
            <person name="Israni S."/>
            <person name="Pitluck S."/>
            <person name="Chain P."/>
            <person name="Malfatti S."/>
            <person name="Shin M."/>
            <person name="Vergez L."/>
            <person name="Schmutz J."/>
            <person name="Larimer F."/>
            <person name="Land M."/>
            <person name="Hauser L."/>
            <person name="Kyrpides N."/>
            <person name="Lykidis A."/>
            <person name="Richardson P."/>
        </authorList>
    </citation>
    <scope>NUCLEOTIDE SEQUENCE [LARGE SCALE GENOMIC DNA]</scope>
    <source>
        <strain>ATCC 25196 / NCIMB 11849 / C 71</strain>
    </source>
</reference>
<accession>Q2Y5H6</accession>
<name>BPT_NITMU</name>
<protein>
    <recommendedName>
        <fullName evidence="1">Aspartate/glutamate leucyltransferase</fullName>
        <ecNumber evidence="1">2.3.2.29</ecNumber>
    </recommendedName>
</protein>
<feature type="chain" id="PRO_0000263197" description="Aspartate/glutamate leucyltransferase">
    <location>
        <begin position="1"/>
        <end position="251"/>
    </location>
</feature>
<evidence type="ECO:0000255" key="1">
    <source>
        <dbReference type="HAMAP-Rule" id="MF_00689"/>
    </source>
</evidence>
<dbReference type="EC" id="2.3.2.29" evidence="1"/>
<dbReference type="EMBL" id="CP000103">
    <property type="protein sequence ID" value="ABB75995.1"/>
    <property type="molecule type" value="Genomic_DNA"/>
</dbReference>
<dbReference type="RefSeq" id="WP_011381987.1">
    <property type="nucleotide sequence ID" value="NC_007614.1"/>
</dbReference>
<dbReference type="SMR" id="Q2Y5H6"/>
<dbReference type="STRING" id="323848.Nmul_A2708"/>
<dbReference type="KEGG" id="nmu:Nmul_A2708"/>
<dbReference type="eggNOG" id="COG2935">
    <property type="taxonomic scope" value="Bacteria"/>
</dbReference>
<dbReference type="HOGENOM" id="CLU_077607_0_0_4"/>
<dbReference type="OrthoDB" id="9782022at2"/>
<dbReference type="Proteomes" id="UP000002718">
    <property type="component" value="Chromosome"/>
</dbReference>
<dbReference type="GO" id="GO:0005737">
    <property type="term" value="C:cytoplasm"/>
    <property type="evidence" value="ECO:0007669"/>
    <property type="project" value="UniProtKB-SubCell"/>
</dbReference>
<dbReference type="GO" id="GO:0004057">
    <property type="term" value="F:arginyl-tRNA--protein transferase activity"/>
    <property type="evidence" value="ECO:0007669"/>
    <property type="project" value="InterPro"/>
</dbReference>
<dbReference type="GO" id="GO:0008914">
    <property type="term" value="F:leucyl-tRNA--protein transferase activity"/>
    <property type="evidence" value="ECO:0007669"/>
    <property type="project" value="UniProtKB-UniRule"/>
</dbReference>
<dbReference type="GO" id="GO:0071596">
    <property type="term" value="P:ubiquitin-dependent protein catabolic process via the N-end rule pathway"/>
    <property type="evidence" value="ECO:0007669"/>
    <property type="project" value="InterPro"/>
</dbReference>
<dbReference type="HAMAP" id="MF_00689">
    <property type="entry name" value="Bpt"/>
    <property type="match status" value="1"/>
</dbReference>
<dbReference type="InterPro" id="IPR016181">
    <property type="entry name" value="Acyl_CoA_acyltransferase"/>
</dbReference>
<dbReference type="InterPro" id="IPR017138">
    <property type="entry name" value="Asp_Glu_LeuTrfase"/>
</dbReference>
<dbReference type="InterPro" id="IPR030700">
    <property type="entry name" value="N-end_Aminoacyl_Trfase"/>
</dbReference>
<dbReference type="InterPro" id="IPR007472">
    <property type="entry name" value="N-end_Aminoacyl_Trfase_C"/>
</dbReference>
<dbReference type="InterPro" id="IPR007471">
    <property type="entry name" value="N-end_Aminoacyl_Trfase_N"/>
</dbReference>
<dbReference type="NCBIfam" id="NF002341">
    <property type="entry name" value="PRK01305.1-1"/>
    <property type="match status" value="1"/>
</dbReference>
<dbReference type="NCBIfam" id="NF002342">
    <property type="entry name" value="PRK01305.1-3"/>
    <property type="match status" value="1"/>
</dbReference>
<dbReference type="NCBIfam" id="NF002346">
    <property type="entry name" value="PRK01305.2-3"/>
    <property type="match status" value="1"/>
</dbReference>
<dbReference type="PANTHER" id="PTHR21367">
    <property type="entry name" value="ARGININE-TRNA-PROTEIN TRANSFERASE 1"/>
    <property type="match status" value="1"/>
</dbReference>
<dbReference type="PANTHER" id="PTHR21367:SF1">
    <property type="entry name" value="ARGINYL-TRNA--PROTEIN TRANSFERASE 1"/>
    <property type="match status" value="1"/>
</dbReference>
<dbReference type="Pfam" id="PF04377">
    <property type="entry name" value="ATE_C"/>
    <property type="match status" value="1"/>
</dbReference>
<dbReference type="Pfam" id="PF04376">
    <property type="entry name" value="ATE_N"/>
    <property type="match status" value="1"/>
</dbReference>
<dbReference type="PIRSF" id="PIRSF037208">
    <property type="entry name" value="ATE_pro_prd"/>
    <property type="match status" value="1"/>
</dbReference>
<dbReference type="SUPFAM" id="SSF55729">
    <property type="entry name" value="Acyl-CoA N-acyltransferases (Nat)"/>
    <property type="match status" value="1"/>
</dbReference>